<organism>
    <name type="scientific">Spinacia oleracea</name>
    <name type="common">Spinach</name>
    <dbReference type="NCBI Taxonomy" id="3562"/>
    <lineage>
        <taxon>Eukaryota</taxon>
        <taxon>Viridiplantae</taxon>
        <taxon>Streptophyta</taxon>
        <taxon>Embryophyta</taxon>
        <taxon>Tracheophyta</taxon>
        <taxon>Spermatophyta</taxon>
        <taxon>Magnoliopsida</taxon>
        <taxon>eudicotyledons</taxon>
        <taxon>Gunneridae</taxon>
        <taxon>Pentapetalae</taxon>
        <taxon>Caryophyllales</taxon>
        <taxon>Chenopodiaceae</taxon>
        <taxon>Chenopodioideae</taxon>
        <taxon>Anserineae</taxon>
        <taxon>Spinacia</taxon>
    </lineage>
</organism>
<keyword id="KW-0002">3D-structure</keyword>
<keyword id="KW-0066">ATP synthesis</keyword>
<keyword id="KW-0138">CF(0)</keyword>
<keyword id="KW-0150">Chloroplast</keyword>
<keyword id="KW-0903">Direct protein sequencing</keyword>
<keyword id="KW-0375">Hydrogen ion transport</keyword>
<keyword id="KW-0406">Ion transport</keyword>
<keyword id="KW-0472">Membrane</keyword>
<keyword id="KW-0934">Plastid</keyword>
<keyword id="KW-1185">Reference proteome</keyword>
<keyword id="KW-0793">Thylakoid</keyword>
<keyword id="KW-0812">Transmembrane</keyword>
<keyword id="KW-1133">Transmembrane helix</keyword>
<keyword id="KW-0813">Transport</keyword>
<feature type="chain" id="PRO_0000002599" description="ATP synthase subunit a, chloroplastic">
    <location>
        <begin position="1"/>
        <end position="247"/>
    </location>
</feature>
<feature type="transmembrane region" description="Helical" evidence="1">
    <location>
        <begin position="38"/>
        <end position="58"/>
    </location>
</feature>
<feature type="transmembrane region" description="Helical" evidence="1">
    <location>
        <begin position="95"/>
        <end position="115"/>
    </location>
</feature>
<feature type="transmembrane region" description="Helical" evidence="1">
    <location>
        <begin position="134"/>
        <end position="154"/>
    </location>
</feature>
<feature type="transmembrane region" description="Helical" evidence="1">
    <location>
        <begin position="199"/>
        <end position="219"/>
    </location>
</feature>
<feature type="transmembrane region" description="Helical" evidence="1">
    <location>
        <begin position="220"/>
        <end position="240"/>
    </location>
</feature>
<feature type="sequence conflict" description="In Ref. 2; CAA27401." evidence="2" ref="2">
    <original>GQV</original>
    <variation>DKA</variation>
    <location>
        <begin position="37"/>
        <end position="39"/>
    </location>
</feature>
<feature type="sequence conflict" description="In Ref. 2; CAA27401." evidence="2" ref="2">
    <original>T</original>
    <variation>A</variation>
    <location>
        <position position="144"/>
    </location>
</feature>
<feature type="strand" evidence="3">
    <location>
        <begin position="28"/>
        <end position="36"/>
    </location>
</feature>
<feature type="helix" evidence="3">
    <location>
        <begin position="37"/>
        <end position="54"/>
    </location>
</feature>
<feature type="turn" evidence="3">
    <location>
        <begin position="55"/>
        <end position="57"/>
    </location>
</feature>
<feature type="strand" evidence="3">
    <location>
        <begin position="58"/>
        <end position="60"/>
    </location>
</feature>
<feature type="helix" evidence="3">
    <location>
        <begin position="69"/>
        <end position="84"/>
    </location>
</feature>
<feature type="turn" evidence="3">
    <location>
        <begin position="85"/>
        <end position="87"/>
    </location>
</feature>
<feature type="helix" evidence="3">
    <location>
        <begin position="95"/>
        <end position="114"/>
    </location>
</feature>
<feature type="strand" evidence="3">
    <location>
        <begin position="118"/>
        <end position="120"/>
    </location>
</feature>
<feature type="helix" evidence="3">
    <location>
        <begin position="130"/>
        <end position="132"/>
    </location>
</feature>
<feature type="helix" evidence="3">
    <location>
        <begin position="134"/>
        <end position="154"/>
    </location>
</feature>
<feature type="strand" evidence="3">
    <location>
        <begin position="158"/>
        <end position="160"/>
    </location>
</feature>
<feature type="helix" evidence="3">
    <location>
        <begin position="172"/>
        <end position="207"/>
    </location>
</feature>
<feature type="helix" evidence="3">
    <location>
        <begin position="214"/>
        <end position="243"/>
    </location>
</feature>
<accession>P06451</accession>
<geneLocation type="chloroplast"/>
<gene>
    <name type="primary">atpI</name>
</gene>
<evidence type="ECO:0000255" key="1"/>
<evidence type="ECO:0000305" key="2"/>
<evidence type="ECO:0007829" key="3">
    <source>
        <dbReference type="PDB" id="6FKF"/>
    </source>
</evidence>
<proteinExistence type="evidence at protein level"/>
<sequence>MNVLSYSINPLKGLYAISGVEVGQHFYWQIGGFQIHGQVLITSWVVIAILLGSAAIAVRSPQTIPTGGQNFFEYVLEFIRDVSKTQIGEEYRPWVPFIGTMFLFIFVSNWSGALLPWKIIQLPHGELAAPTNDINTTVALALLTSVAYFYAGLTKKGLGYFGKYIQPTPILLPINILEDFTKPLSLSFRLFGNILADELVVVVLVSLVPLVVPIPVMFLGLFTSGIQALIFATLAAAYIGESLEGHH</sequence>
<name>ATPI_SPIOL</name>
<reference key="1">
    <citation type="journal article" date="1987" name="J. Mol. Biol.">
        <title>A gene cluster in the spinach and pea chloroplast genomes encoding one CF1 and three CF0 subunits of the H+-ATP synthase complex and the ribosomal protein S2.</title>
        <authorList>
            <person name="Hudson G.S."/>
            <person name="Mason J.G."/>
            <person name="Holton T.A."/>
            <person name="Koller B."/>
            <person name="Cox G.B."/>
            <person name="Whitfeld P.R."/>
            <person name="Bottomley W."/>
        </authorList>
    </citation>
    <scope>NUCLEOTIDE SEQUENCE [GENOMIC DNA]</scope>
</reference>
<reference key="2">
    <citation type="journal article" date="1986" name="Mol. Gen. Genet.">
        <title>Chloroplast ATP synthase of spinach contains nine nonidentical subunit species, six of which are encoded by plastid chromosomes in two operons in a phylogenetically conserved arrangement.</title>
        <authorList>
            <person name="Hennig J."/>
            <person name="Herrmann R.G."/>
        </authorList>
    </citation>
    <scope>NUCLEOTIDE SEQUENCE [GENOMIC DNA]</scope>
</reference>
<reference key="3">
    <citation type="journal article" date="2001" name="Plant Mol. Biol.">
        <title>The plastid chromosome of spinach (Spinacia oleracea): complete nucleotide sequence and gene organization.</title>
        <authorList>
            <person name="Schmitz-Linneweber C."/>
            <person name="Maier R.M."/>
            <person name="Alcaraz J.-P."/>
            <person name="Cottet A."/>
            <person name="Herrmann R.G."/>
            <person name="Mache R."/>
        </authorList>
    </citation>
    <scope>NUCLEOTIDE SEQUENCE [LARGE SCALE GENOMIC DNA]</scope>
    <source>
        <strain>cv. Geant d'hiver</strain>
        <strain>cv. Monatol</strain>
    </source>
</reference>
<reference key="4">
    <citation type="journal article" date="1987" name="FEBS Lett.">
        <title>Isolation and identification of a fourth subunit in the membrane part of the chloroplast ATP-synthase.</title>
        <authorList>
            <person name="Fromme P."/>
            <person name="Graber P."/>
            <person name="Salnikow J."/>
        </authorList>
    </citation>
    <scope>PROTEIN SEQUENCE OF 19-34</scope>
</reference>
<dbReference type="EMBL" id="X03775">
    <property type="protein sequence ID" value="CAA27401.1"/>
    <property type="molecule type" value="Genomic_DNA"/>
</dbReference>
<dbReference type="EMBL" id="AJ400848">
    <property type="protein sequence ID" value="CAB88713.1"/>
    <property type="molecule type" value="Genomic_DNA"/>
</dbReference>
<dbReference type="PIR" id="S00582">
    <property type="entry name" value="PWSPA6"/>
</dbReference>
<dbReference type="RefSeq" id="NP_054920.1">
    <property type="nucleotide sequence ID" value="NC_002202.1"/>
</dbReference>
<dbReference type="PDB" id="6FKF">
    <property type="method" value="EM"/>
    <property type="resolution" value="3.10 A"/>
    <property type="chains" value="a=1-247"/>
</dbReference>
<dbReference type="PDB" id="6FKH">
    <property type="method" value="EM"/>
    <property type="resolution" value="4.20 A"/>
    <property type="chains" value="a=1-247"/>
</dbReference>
<dbReference type="PDB" id="6FKI">
    <property type="method" value="EM"/>
    <property type="resolution" value="4.30 A"/>
    <property type="chains" value="a=1-247"/>
</dbReference>
<dbReference type="PDB" id="6VM1">
    <property type="method" value="EM"/>
    <property type="resolution" value="7.90 A"/>
    <property type="chains" value="a=1-247"/>
</dbReference>
<dbReference type="PDB" id="6VM4">
    <property type="method" value="EM"/>
    <property type="resolution" value="7.08 A"/>
    <property type="chains" value="a=1-247"/>
</dbReference>
<dbReference type="PDB" id="6VMB">
    <property type="method" value="EM"/>
    <property type="resolution" value="5.23 A"/>
    <property type="chains" value="a=1-247"/>
</dbReference>
<dbReference type="PDB" id="6VMG">
    <property type="method" value="EM"/>
    <property type="resolution" value="6.46 A"/>
    <property type="chains" value="a=1-247"/>
</dbReference>
<dbReference type="PDB" id="6VOF">
    <property type="method" value="EM"/>
    <property type="resolution" value="4.51 A"/>
    <property type="chains" value="a=1-247"/>
</dbReference>
<dbReference type="PDB" id="6VOH">
    <property type="method" value="EM"/>
    <property type="resolution" value="4.16 A"/>
    <property type="chains" value="a=1-247"/>
</dbReference>
<dbReference type="PDB" id="6VOJ">
    <property type="method" value="EM"/>
    <property type="resolution" value="4.34 A"/>
    <property type="chains" value="a=1-247"/>
</dbReference>
<dbReference type="PDB" id="6VOL">
    <property type="method" value="EM"/>
    <property type="resolution" value="4.06 A"/>
    <property type="chains" value="a=1-247"/>
</dbReference>
<dbReference type="PDB" id="6VON">
    <property type="method" value="EM"/>
    <property type="resolution" value="3.35 A"/>
    <property type="chains" value="a=1-247"/>
</dbReference>
<dbReference type="PDBsum" id="6FKF"/>
<dbReference type="PDBsum" id="6FKH"/>
<dbReference type="PDBsum" id="6FKI"/>
<dbReference type="PDBsum" id="6VM1"/>
<dbReference type="PDBsum" id="6VM4"/>
<dbReference type="PDBsum" id="6VMB"/>
<dbReference type="PDBsum" id="6VMG"/>
<dbReference type="PDBsum" id="6VOF"/>
<dbReference type="PDBsum" id="6VOH"/>
<dbReference type="PDBsum" id="6VOJ"/>
<dbReference type="PDBsum" id="6VOL"/>
<dbReference type="PDBsum" id="6VON"/>
<dbReference type="EMDB" id="EMD-21235"/>
<dbReference type="EMDB" id="EMD-21238"/>
<dbReference type="EMDB" id="EMD-21239"/>
<dbReference type="EMDB" id="EMD-21241"/>
<dbReference type="EMDB" id="EMD-21262"/>
<dbReference type="EMDB" id="EMD-21264"/>
<dbReference type="EMDB" id="EMD-21266"/>
<dbReference type="EMDB" id="EMD-21268"/>
<dbReference type="EMDB" id="EMD-21270"/>
<dbReference type="EMDB" id="EMD-4270"/>
<dbReference type="EMDB" id="EMD-4271"/>
<dbReference type="EMDB" id="EMD-4272"/>
<dbReference type="SASBDB" id="P06451"/>
<dbReference type="SMR" id="P06451"/>
<dbReference type="FunCoup" id="P06451">
    <property type="interactions" value="111"/>
</dbReference>
<dbReference type="IntAct" id="P06451">
    <property type="interactions" value="1"/>
</dbReference>
<dbReference type="STRING" id="3562.P06451"/>
<dbReference type="ChEMBL" id="CHEMBL2366567"/>
<dbReference type="GeneID" id="2715580"/>
<dbReference type="KEGG" id="soe:2715580"/>
<dbReference type="InParanoid" id="P06451"/>
<dbReference type="OrthoDB" id="2303at2759"/>
<dbReference type="PRO" id="PR:P06451"/>
<dbReference type="Proteomes" id="UP001155700">
    <property type="component" value="Chloroplast Pltd"/>
</dbReference>
<dbReference type="GO" id="GO:0009535">
    <property type="term" value="C:chloroplast thylakoid membrane"/>
    <property type="evidence" value="ECO:0007669"/>
    <property type="project" value="UniProtKB-SubCell"/>
</dbReference>
<dbReference type="GO" id="GO:0005886">
    <property type="term" value="C:plasma membrane"/>
    <property type="evidence" value="ECO:0007669"/>
    <property type="project" value="UniProtKB-UniRule"/>
</dbReference>
<dbReference type="GO" id="GO:0045259">
    <property type="term" value="C:proton-transporting ATP synthase complex"/>
    <property type="evidence" value="ECO:0007669"/>
    <property type="project" value="UniProtKB-KW"/>
</dbReference>
<dbReference type="GO" id="GO:0046933">
    <property type="term" value="F:proton-transporting ATP synthase activity, rotational mechanism"/>
    <property type="evidence" value="ECO:0007669"/>
    <property type="project" value="UniProtKB-UniRule"/>
</dbReference>
<dbReference type="CDD" id="cd00310">
    <property type="entry name" value="ATP-synt_Fo_a_6"/>
    <property type="match status" value="1"/>
</dbReference>
<dbReference type="FunFam" id="1.20.120.220:FF:000001">
    <property type="entry name" value="ATP synthase subunit a, chloroplastic"/>
    <property type="match status" value="1"/>
</dbReference>
<dbReference type="Gene3D" id="1.20.120.220">
    <property type="entry name" value="ATP synthase, F0 complex, subunit A"/>
    <property type="match status" value="1"/>
</dbReference>
<dbReference type="HAMAP" id="MF_01393">
    <property type="entry name" value="ATP_synth_a_bact"/>
    <property type="match status" value="1"/>
</dbReference>
<dbReference type="InterPro" id="IPR045082">
    <property type="entry name" value="ATP_syn_F0_a_bact/chloroplast"/>
</dbReference>
<dbReference type="InterPro" id="IPR000568">
    <property type="entry name" value="ATP_synth_F0_asu"/>
</dbReference>
<dbReference type="InterPro" id="IPR023011">
    <property type="entry name" value="ATP_synth_F0_asu_AS"/>
</dbReference>
<dbReference type="InterPro" id="IPR035908">
    <property type="entry name" value="F0_ATP_A_sf"/>
</dbReference>
<dbReference type="NCBIfam" id="TIGR01131">
    <property type="entry name" value="ATP_synt_6_or_A"/>
    <property type="match status" value="1"/>
</dbReference>
<dbReference type="PANTHER" id="PTHR42823">
    <property type="entry name" value="ATP SYNTHASE SUBUNIT A, CHLOROPLASTIC"/>
    <property type="match status" value="1"/>
</dbReference>
<dbReference type="PANTHER" id="PTHR42823:SF3">
    <property type="entry name" value="ATP SYNTHASE SUBUNIT A, CHLOROPLASTIC"/>
    <property type="match status" value="1"/>
</dbReference>
<dbReference type="Pfam" id="PF00119">
    <property type="entry name" value="ATP-synt_A"/>
    <property type="match status" value="1"/>
</dbReference>
<dbReference type="PRINTS" id="PR00123">
    <property type="entry name" value="ATPASEA"/>
</dbReference>
<dbReference type="SUPFAM" id="SSF81336">
    <property type="entry name" value="F1F0 ATP synthase subunit A"/>
    <property type="match status" value="1"/>
</dbReference>
<dbReference type="PROSITE" id="PS00449">
    <property type="entry name" value="ATPASE_A"/>
    <property type="match status" value="1"/>
</dbReference>
<comment type="function">
    <text>Key component of the proton channel; it plays a direct role in the translocation of protons across the membrane.</text>
</comment>
<comment type="subunit">
    <text>F-type ATPases have 2 components, CF(1) - the catalytic core - and CF(0) - the membrane proton channel. CF(1) has five subunits: alpha(3), beta(3), gamma(1), delta(1), epsilon(1). CF(0) has four main subunits: a, b, b' and c.</text>
</comment>
<comment type="subcellular location">
    <subcellularLocation>
        <location>Plastid</location>
        <location>Chloroplast thylakoid membrane</location>
        <topology>Multi-pass membrane protein</topology>
    </subcellularLocation>
</comment>
<comment type="similarity">
    <text evidence="2">Belongs to the ATPase A chain family.</text>
</comment>
<comment type="caution">
    <text evidence="2">This has been proposed to be processed from a precursor (Ref.4); however no signal is predicted by signal sequence detection programs.</text>
</comment>
<protein>
    <recommendedName>
        <fullName>ATP synthase subunit a, chloroplastic</fullName>
    </recommendedName>
    <alternativeName>
        <fullName>ATP synthase F0 sector subunit a</fullName>
    </alternativeName>
    <alternativeName>
        <fullName>F-ATPase subunit IV</fullName>
    </alternativeName>
</protein>